<gene>
    <name evidence="1" type="primary">rplT</name>
    <name type="ordered locus">Sfri_2025</name>
</gene>
<accession>Q082E4</accession>
<feature type="chain" id="PRO_1000049067" description="Large ribosomal subunit protein bL20">
    <location>
        <begin position="1"/>
        <end position="119"/>
    </location>
</feature>
<comment type="function">
    <text evidence="1">Binds directly to 23S ribosomal RNA and is necessary for the in vitro assembly process of the 50S ribosomal subunit. It is not involved in the protein synthesizing functions of that subunit.</text>
</comment>
<comment type="similarity">
    <text evidence="1">Belongs to the bacterial ribosomal protein bL20 family.</text>
</comment>
<keyword id="KW-1185">Reference proteome</keyword>
<keyword id="KW-0687">Ribonucleoprotein</keyword>
<keyword id="KW-0689">Ribosomal protein</keyword>
<keyword id="KW-0694">RNA-binding</keyword>
<keyword id="KW-0699">rRNA-binding</keyword>
<dbReference type="EMBL" id="CP000447">
    <property type="protein sequence ID" value="ABI71871.1"/>
    <property type="molecule type" value="Genomic_DNA"/>
</dbReference>
<dbReference type="RefSeq" id="WP_011637486.1">
    <property type="nucleotide sequence ID" value="NC_008345.1"/>
</dbReference>
<dbReference type="SMR" id="Q082E4"/>
<dbReference type="STRING" id="318167.Sfri_2025"/>
<dbReference type="KEGG" id="sfr:Sfri_2025"/>
<dbReference type="eggNOG" id="COG0292">
    <property type="taxonomic scope" value="Bacteria"/>
</dbReference>
<dbReference type="HOGENOM" id="CLU_123265_0_1_6"/>
<dbReference type="OrthoDB" id="9808966at2"/>
<dbReference type="Proteomes" id="UP000000684">
    <property type="component" value="Chromosome"/>
</dbReference>
<dbReference type="GO" id="GO:1990904">
    <property type="term" value="C:ribonucleoprotein complex"/>
    <property type="evidence" value="ECO:0007669"/>
    <property type="project" value="UniProtKB-KW"/>
</dbReference>
<dbReference type="GO" id="GO:0005840">
    <property type="term" value="C:ribosome"/>
    <property type="evidence" value="ECO:0007669"/>
    <property type="project" value="UniProtKB-KW"/>
</dbReference>
<dbReference type="GO" id="GO:0019843">
    <property type="term" value="F:rRNA binding"/>
    <property type="evidence" value="ECO:0007669"/>
    <property type="project" value="UniProtKB-UniRule"/>
</dbReference>
<dbReference type="GO" id="GO:0003735">
    <property type="term" value="F:structural constituent of ribosome"/>
    <property type="evidence" value="ECO:0007669"/>
    <property type="project" value="InterPro"/>
</dbReference>
<dbReference type="GO" id="GO:0000027">
    <property type="term" value="P:ribosomal large subunit assembly"/>
    <property type="evidence" value="ECO:0007669"/>
    <property type="project" value="UniProtKB-UniRule"/>
</dbReference>
<dbReference type="GO" id="GO:0006412">
    <property type="term" value="P:translation"/>
    <property type="evidence" value="ECO:0007669"/>
    <property type="project" value="InterPro"/>
</dbReference>
<dbReference type="CDD" id="cd07026">
    <property type="entry name" value="Ribosomal_L20"/>
    <property type="match status" value="1"/>
</dbReference>
<dbReference type="FunFam" id="1.10.1900.20:FF:000001">
    <property type="entry name" value="50S ribosomal protein L20"/>
    <property type="match status" value="1"/>
</dbReference>
<dbReference type="Gene3D" id="6.10.160.10">
    <property type="match status" value="1"/>
</dbReference>
<dbReference type="Gene3D" id="1.10.1900.20">
    <property type="entry name" value="Ribosomal protein L20"/>
    <property type="match status" value="1"/>
</dbReference>
<dbReference type="HAMAP" id="MF_00382">
    <property type="entry name" value="Ribosomal_bL20"/>
    <property type="match status" value="1"/>
</dbReference>
<dbReference type="InterPro" id="IPR005813">
    <property type="entry name" value="Ribosomal_bL20"/>
</dbReference>
<dbReference type="InterPro" id="IPR049946">
    <property type="entry name" value="RIBOSOMAL_L20_CS"/>
</dbReference>
<dbReference type="InterPro" id="IPR035566">
    <property type="entry name" value="Ribosomal_protein_bL20_C"/>
</dbReference>
<dbReference type="NCBIfam" id="TIGR01032">
    <property type="entry name" value="rplT_bact"/>
    <property type="match status" value="1"/>
</dbReference>
<dbReference type="PANTHER" id="PTHR10986">
    <property type="entry name" value="39S RIBOSOMAL PROTEIN L20"/>
    <property type="match status" value="1"/>
</dbReference>
<dbReference type="Pfam" id="PF00453">
    <property type="entry name" value="Ribosomal_L20"/>
    <property type="match status" value="1"/>
</dbReference>
<dbReference type="PRINTS" id="PR00062">
    <property type="entry name" value="RIBOSOMALL20"/>
</dbReference>
<dbReference type="SUPFAM" id="SSF74731">
    <property type="entry name" value="Ribosomal protein L20"/>
    <property type="match status" value="1"/>
</dbReference>
<dbReference type="PROSITE" id="PS00937">
    <property type="entry name" value="RIBOSOMAL_L20"/>
    <property type="match status" value="1"/>
</dbReference>
<name>RL20_SHEFN</name>
<organism>
    <name type="scientific">Shewanella frigidimarina (strain NCIMB 400)</name>
    <dbReference type="NCBI Taxonomy" id="318167"/>
    <lineage>
        <taxon>Bacteria</taxon>
        <taxon>Pseudomonadati</taxon>
        <taxon>Pseudomonadota</taxon>
        <taxon>Gammaproteobacteria</taxon>
        <taxon>Alteromonadales</taxon>
        <taxon>Shewanellaceae</taxon>
        <taxon>Shewanella</taxon>
    </lineage>
</organism>
<reference key="1">
    <citation type="submission" date="2006-08" db="EMBL/GenBank/DDBJ databases">
        <title>Complete sequence of Shewanella frigidimarina NCIMB 400.</title>
        <authorList>
            <consortium name="US DOE Joint Genome Institute"/>
            <person name="Copeland A."/>
            <person name="Lucas S."/>
            <person name="Lapidus A."/>
            <person name="Barry K."/>
            <person name="Detter J.C."/>
            <person name="Glavina del Rio T."/>
            <person name="Hammon N."/>
            <person name="Israni S."/>
            <person name="Dalin E."/>
            <person name="Tice H."/>
            <person name="Pitluck S."/>
            <person name="Fredrickson J.K."/>
            <person name="Kolker E."/>
            <person name="McCuel L.A."/>
            <person name="DiChristina T."/>
            <person name="Nealson K.H."/>
            <person name="Newman D."/>
            <person name="Tiedje J.M."/>
            <person name="Zhou J."/>
            <person name="Romine M.F."/>
            <person name="Culley D.E."/>
            <person name="Serres M."/>
            <person name="Chertkov O."/>
            <person name="Brettin T."/>
            <person name="Bruce D."/>
            <person name="Han C."/>
            <person name="Tapia R."/>
            <person name="Gilna P."/>
            <person name="Schmutz J."/>
            <person name="Larimer F."/>
            <person name="Land M."/>
            <person name="Hauser L."/>
            <person name="Kyrpides N."/>
            <person name="Mikhailova N."/>
            <person name="Richardson P."/>
        </authorList>
    </citation>
    <scope>NUCLEOTIDE SEQUENCE [LARGE SCALE GENOMIC DNA]</scope>
    <source>
        <strain>NCIMB 400</strain>
    </source>
</reference>
<evidence type="ECO:0000255" key="1">
    <source>
        <dbReference type="HAMAP-Rule" id="MF_00382"/>
    </source>
</evidence>
<evidence type="ECO:0000305" key="2"/>
<proteinExistence type="inferred from homology"/>
<sequence>MPRVKRGVTARARHKKVLKLAKGYYGARSRTYRVAVQAVTKAGQYAYRDRRQKKRQFRQLWIARINAASRQNGLSYSRFINGLKKASIEIDRKILADIAVFDKVVFATLVEKAKEALTK</sequence>
<protein>
    <recommendedName>
        <fullName evidence="1">Large ribosomal subunit protein bL20</fullName>
    </recommendedName>
    <alternativeName>
        <fullName evidence="2">50S ribosomal protein L20</fullName>
    </alternativeName>
</protein>